<comment type="function">
    <text evidence="1">Recruits and activates the Arp2/3 complex, which in turn leads to actin polymerization, promoting Rickettsia motility during infection.</text>
</comment>
<comment type="subunit">
    <text evidence="1">Homodimer.</text>
</comment>
<comment type="subcellular location">
    <subcellularLocation>
        <location evidence="1">Cell surface</location>
    </subcellularLocation>
</comment>
<comment type="sequence caution" evidence="4">
    <conflict type="erroneous initiation">
        <sequence resource="EMBL-CDS" id="AAY61222"/>
    </conflict>
</comment>
<gene>
    <name type="primary">rickA</name>
    <name type="ordered locus">RF_0371</name>
</gene>
<reference key="1">
    <citation type="journal article" date="2005" name="PLoS Biol.">
        <title>The genome sequence of Rickettsia felis identifies the first putative conjugative plasmid in an obligate intracellular parasite.</title>
        <authorList>
            <person name="Ogata H."/>
            <person name="Renesto P."/>
            <person name="Audic S."/>
            <person name="Robert C."/>
            <person name="Blanc G."/>
            <person name="Fournier P.-E."/>
            <person name="Parinello H."/>
            <person name="Claverie J.-M."/>
            <person name="Raoult D."/>
        </authorList>
    </citation>
    <scope>NUCLEOTIDE SEQUENCE [LARGE SCALE GENOMIC DNA]</scope>
    <source>
        <strain>ATCC VR-1525 / URRWXCal2</strain>
    </source>
</reference>
<feature type="chain" id="PRO_0000259655" description="Arp2/3 complex-activating protein rickA">
    <location>
        <begin position="1"/>
        <end position="526"/>
    </location>
</feature>
<feature type="domain" description="WH2 1" evidence="2">
    <location>
        <begin position="383"/>
        <end position="400"/>
    </location>
</feature>
<feature type="domain" description="WH2 2" evidence="2">
    <location>
        <begin position="410"/>
        <end position="427"/>
    </location>
</feature>
<feature type="region of interest" description="Disordered" evidence="3">
    <location>
        <begin position="305"/>
        <end position="356"/>
    </location>
</feature>
<feature type="region of interest" description="Disordered" evidence="3">
    <location>
        <begin position="425"/>
        <end position="452"/>
    </location>
</feature>
<feature type="region of interest" description="Central and acidic domains">
    <location>
        <begin position="448"/>
        <end position="484"/>
    </location>
</feature>
<feature type="region of interest" description="Disordered" evidence="3">
    <location>
        <begin position="464"/>
        <end position="526"/>
    </location>
</feature>
<feature type="compositionally biased region" description="Pro residues" evidence="3">
    <location>
        <begin position="318"/>
        <end position="352"/>
    </location>
</feature>
<feature type="compositionally biased region" description="Low complexity" evidence="3">
    <location>
        <begin position="464"/>
        <end position="480"/>
    </location>
</feature>
<feature type="compositionally biased region" description="Polar residues" evidence="3">
    <location>
        <begin position="481"/>
        <end position="491"/>
    </location>
</feature>
<feature type="compositionally biased region" description="Polar residues" evidence="3">
    <location>
        <begin position="506"/>
        <end position="526"/>
    </location>
</feature>
<organism>
    <name type="scientific">Rickettsia felis (strain ATCC VR-1525 / URRWXCal2)</name>
    <name type="common">Rickettsia azadi</name>
    <dbReference type="NCBI Taxonomy" id="315456"/>
    <lineage>
        <taxon>Bacteria</taxon>
        <taxon>Pseudomonadati</taxon>
        <taxon>Pseudomonadota</taxon>
        <taxon>Alphaproteobacteria</taxon>
        <taxon>Rickettsiales</taxon>
        <taxon>Rickettsiaceae</taxon>
        <taxon>Rickettsieae</taxon>
        <taxon>Rickettsia</taxon>
        <taxon>spotted fever group</taxon>
    </lineage>
</organism>
<sequence length="526" mass="59855">MAKEIDINKLLAQENNALNTILSQVNELCEQNKKLQGLIEIQNETKELEKEHNRSLPWFKRLVKTVSNVKYIFVKSEEQLTNEAIKYNNKILKDIDNKIYNIAEKSAPLKQELQEEIEKNFKDLTKKDLSKEQRERLSEVYFSYKSKPERFSALNMTNPLQFIKAEELEKQYNSLNATKQNIQNLISENSNIKELKEIQKQVAEIREEIPYTFFEKLNNIWQNVKNVFVNNSEQVLAKNKESNTRAIRKIDEQLYKTKHKFEELIENKERNINDIIAKLPDNEELQKIVSNLANHMTSKKEPILTTSSIAKPLENNVTPPPPLTKNNIPPPPPPPPLSKNNILPPPPPPMPTMAPAQTETLSKPVGVTTTVKKLENQPRPSIDTSDLMREIAGPKNLRKVEKTDVKTQDSRDLLLQSIRGEHKLRKVEFDPNTGKPVAHSHSKPAQNVSKPNGVASILARRVAMEMSDSSSSSGSESDSGNWSDASVNSNKPKALKTRGERDAKTTTHAQKILSNRSSQKPSFVRS</sequence>
<evidence type="ECO:0000250" key="1"/>
<evidence type="ECO:0000255" key="2">
    <source>
        <dbReference type="PROSITE-ProRule" id="PRU00406"/>
    </source>
</evidence>
<evidence type="ECO:0000256" key="3">
    <source>
        <dbReference type="SAM" id="MobiDB-lite"/>
    </source>
</evidence>
<evidence type="ECO:0000305" key="4"/>
<name>RICKA_RICFE</name>
<proteinExistence type="inferred from homology"/>
<protein>
    <recommendedName>
        <fullName>Arp2/3 complex-activating protein rickA</fullName>
    </recommendedName>
    <alternativeName>
        <fullName>Actin polymerization protein rickA</fullName>
    </alternativeName>
</protein>
<accession>Q4UMI6</accession>
<dbReference type="EMBL" id="CP000053">
    <property type="protein sequence ID" value="AAY61222.1"/>
    <property type="status" value="ALT_INIT"/>
    <property type="molecule type" value="Genomic_DNA"/>
</dbReference>
<dbReference type="SMR" id="Q4UMI6"/>
<dbReference type="STRING" id="315456.RF_0371"/>
<dbReference type="KEGG" id="rfe:RF_0371"/>
<dbReference type="eggNOG" id="COG1196">
    <property type="taxonomic scope" value="Bacteria"/>
</dbReference>
<dbReference type="HOGENOM" id="CLU_567284_0_0_5"/>
<dbReference type="OrthoDB" id="7161168at2"/>
<dbReference type="Proteomes" id="UP000008548">
    <property type="component" value="Chromosome"/>
</dbReference>
<dbReference type="GO" id="GO:0009986">
    <property type="term" value="C:cell surface"/>
    <property type="evidence" value="ECO:0007669"/>
    <property type="project" value="UniProtKB-SubCell"/>
</dbReference>
<dbReference type="GO" id="GO:0003779">
    <property type="term" value="F:actin binding"/>
    <property type="evidence" value="ECO:0007669"/>
    <property type="project" value="UniProtKB-KW"/>
</dbReference>
<dbReference type="Gene3D" id="6.10.280.150">
    <property type="match status" value="1"/>
</dbReference>
<dbReference type="InterPro" id="IPR003124">
    <property type="entry name" value="WH2_dom"/>
</dbReference>
<dbReference type="SMART" id="SM00246">
    <property type="entry name" value="WH2"/>
    <property type="match status" value="2"/>
</dbReference>
<dbReference type="PROSITE" id="PS51082">
    <property type="entry name" value="WH2"/>
    <property type="match status" value="2"/>
</dbReference>
<keyword id="KW-0009">Actin-binding</keyword>
<keyword id="KW-0677">Repeat</keyword>